<sequence length="379" mass="39652">MEVKPPPGRPQPDSGRRRRRRGEEGHDPKEPEQLRKLFIGGLSFETTDDSLREHFEKWGTLTDCVVMRDPQTKRSRGFGFVTYSCVEEVDAAMCARPHKVDGRVVEPKRAVSREDSVKPGAHLTVKKIFVGGIKEDTEEYNLRDYFEKYGKIETIEVMEDRQSGKKRGFAFVTFDDHDTVDKIVVQKYHTINGHNCEVKKALSKQEMQSAGSQRGRGGGSGNFMGRGGNFGGGGGNFGRGGNFGGRGGYGGGGGGSRGSYGGGDGGYNGFGGDGGNYGGGPGYSSRGGYGGGGPGYGNQGGGYGGGGGGYDGYNEGGNFGGGNYGGGGNYNDFGNYSGQQQSNYGPMKGGSFGGRSSGSPYGGGYGSGGGSGGYGSRRF</sequence>
<feature type="chain" id="PRO_0000081840" description="Heterogeneous nuclear ribonucleoprotein A3">
    <location>
        <begin position="1"/>
        <end position="379"/>
    </location>
</feature>
<feature type="domain" description="RRM 1" evidence="4">
    <location>
        <begin position="35"/>
        <end position="118"/>
    </location>
</feature>
<feature type="domain" description="RRM 2" evidence="4">
    <location>
        <begin position="126"/>
        <end position="205"/>
    </location>
</feature>
<feature type="region of interest" description="Disordered" evidence="5">
    <location>
        <begin position="1"/>
        <end position="34"/>
    </location>
</feature>
<feature type="region of interest" description="Disordered" evidence="5">
    <location>
        <begin position="204"/>
        <end position="225"/>
    </location>
</feature>
<feature type="region of interest" description="Disordered" evidence="5">
    <location>
        <begin position="335"/>
        <end position="379"/>
    </location>
</feature>
<feature type="compositionally biased region" description="Pro residues" evidence="5">
    <location>
        <begin position="1"/>
        <end position="10"/>
    </location>
</feature>
<feature type="compositionally biased region" description="Basic and acidic residues" evidence="5">
    <location>
        <begin position="21"/>
        <end position="34"/>
    </location>
</feature>
<feature type="compositionally biased region" description="Gly residues" evidence="5">
    <location>
        <begin position="214"/>
        <end position="225"/>
    </location>
</feature>
<feature type="compositionally biased region" description="Gly residues" evidence="5">
    <location>
        <begin position="347"/>
        <end position="379"/>
    </location>
</feature>
<feature type="modified residue" description="N-acetylmethionine" evidence="2">
    <location>
        <position position="1"/>
    </location>
</feature>
<feature type="modified residue" description="Phosphoserine" evidence="2">
    <location>
        <position position="14"/>
    </location>
</feature>
<feature type="modified residue" description="Phosphoserine" evidence="2">
    <location>
        <position position="43"/>
    </location>
</feature>
<feature type="modified residue" description="Dimethylated arginine; alternate" evidence="2">
    <location>
        <position position="52"/>
    </location>
</feature>
<feature type="modified residue" description="Omega-N-methylarginine; alternate" evidence="2">
    <location>
        <position position="52"/>
    </location>
</feature>
<feature type="modified residue" description="Omega-N-methylarginine" evidence="2">
    <location>
        <position position="76"/>
    </location>
</feature>
<feature type="modified residue" description="Phosphoserine" evidence="2">
    <location>
        <position position="112"/>
    </location>
</feature>
<feature type="modified residue" description="Phosphoserine" evidence="2">
    <location>
        <position position="116"/>
    </location>
</feature>
<feature type="modified residue" description="Phosphothreonine" evidence="2">
    <location>
        <position position="124"/>
    </location>
</feature>
<feature type="modified residue" description="N6-acetyllysine; alternate" evidence="2">
    <location>
        <position position="134"/>
    </location>
</feature>
<feature type="modified residue" description="Asymmetric dimethylarginine; alternate" evidence="7">
    <location>
        <position position="214"/>
    </location>
</feature>
<feature type="modified residue" description="Omega-N-methylarginine; alternate" evidence="2">
    <location>
        <position position="214"/>
    </location>
</feature>
<feature type="modified residue" description="Asymmetric dimethylarginine; alternate" evidence="7">
    <location>
        <position position="216"/>
    </location>
</feature>
<feature type="modified residue" description="Omega-N-methylarginine; alternate" evidence="2">
    <location>
        <position position="216"/>
    </location>
</feature>
<feature type="modified residue" description="Asymmetric dimethylarginine; alternate" evidence="7">
    <location>
        <position position="226"/>
    </location>
</feature>
<feature type="modified residue" description="Omega-N-methylarginine; alternate" evidence="2">
    <location>
        <position position="226"/>
    </location>
</feature>
<feature type="modified residue" description="Asymmetric dimethylarginine; alternate" evidence="7">
    <location>
        <position position="239"/>
    </location>
</feature>
<feature type="modified residue" description="Omega-N-methylarginine; alternate" evidence="3">
    <location>
        <position position="239"/>
    </location>
</feature>
<feature type="modified residue" description="Asymmetric dimethylarginine; alternate" evidence="7">
    <location>
        <position position="246"/>
    </location>
</feature>
<feature type="modified residue" description="Omega-N-methylarginine; alternate" evidence="2">
    <location>
        <position position="246"/>
    </location>
</feature>
<feature type="modified residue" description="Omega-N-methylarginine" evidence="3">
    <location>
        <position position="257"/>
    </location>
</feature>
<feature type="modified residue" description="Asymmetric dimethylarginine" evidence="7">
    <location>
        <position position="286"/>
    </location>
</feature>
<feature type="modified residue" description="Phosphoserine" evidence="2">
    <location>
        <position position="351"/>
    </location>
</feature>
<feature type="modified residue" description="Omega-N-methylarginine" evidence="2">
    <location>
        <position position="355"/>
    </location>
</feature>
<feature type="modified residue" description="Phosphoserine" evidence="9">
    <location>
        <position position="359"/>
    </location>
</feature>
<feature type="modified residue" description="Phosphotyrosine" evidence="2">
    <location>
        <position position="361"/>
    </location>
</feature>
<feature type="modified residue" description="Phosphotyrosine" evidence="2">
    <location>
        <position position="365"/>
    </location>
</feature>
<feature type="modified residue" description="Phosphoserine" evidence="2">
    <location>
        <position position="367"/>
    </location>
</feature>
<feature type="modified residue" description="Phosphoserine" evidence="2">
    <location>
        <position position="371"/>
    </location>
</feature>
<feature type="modified residue" description="Phosphotyrosine" evidence="2">
    <location>
        <position position="374"/>
    </location>
</feature>
<feature type="modified residue" description="Phosphoserine" evidence="2">
    <location>
        <position position="376"/>
    </location>
</feature>
<feature type="cross-link" description="Glycyl lysine isopeptide (Lys-Gly) (interchain with G-Cter in SUMO2)" evidence="2">
    <location>
        <position position="4"/>
    </location>
</feature>
<feature type="cross-link" description="Glycyl lysine isopeptide (Lys-Gly) (interchain with G-Cter in SUMO2)" evidence="2">
    <location>
        <position position="36"/>
    </location>
</feature>
<feature type="cross-link" description="Glycyl lysine isopeptide (Lys-Gly) (interchain with G-Cter in SUMO2)" evidence="2">
    <location>
        <position position="118"/>
    </location>
</feature>
<feature type="cross-link" description="Glycyl lysine isopeptide (Lys-Gly) (interchain with G-Cter in SUMO2); alternate" evidence="2">
    <location>
        <position position="134"/>
    </location>
</feature>
<feature type="cross-link" description="Glycyl lysine isopeptide (Lys-Gly) (interchain with G-Cter in SUMO2)" evidence="2">
    <location>
        <position position="151"/>
    </location>
</feature>
<feature type="cross-link" description="Glycyl lysine isopeptide (Lys-Gly) (interchain with G-Cter in SUMO2)" evidence="2">
    <location>
        <position position="182"/>
    </location>
</feature>
<feature type="splice variant" id="VSP_011400" description="In isoform 2." evidence="8">
    <original>MEVKPPPGRPQPDSGRRRRRRGE</original>
    <variation>M</variation>
    <location>
        <begin position="1"/>
        <end position="23"/>
    </location>
</feature>
<reference key="1">
    <citation type="journal article" date="2002" name="J. Biol. Chem.">
        <title>Heterogeneous nuclear ribonucleoprotein A3, a novel RNA trafficking response element-binding protein.</title>
        <authorList>
            <person name="Ma A.S.W."/>
            <person name="Moran-Jones K."/>
            <person name="Shan J."/>
            <person name="Munro T.P."/>
            <person name="Snee M.J."/>
            <person name="Hoek K.S."/>
            <person name="Smith R."/>
        </authorList>
    </citation>
    <scope>NUCLEOTIDE SEQUENCE [MRNA] (ISOFORMS 1 AND 2)</scope>
    <scope>FUNCTION</scope>
    <scope>PROTEIN SEQUENCE OF 114-126</scope>
    <scope>IDENTIFICATION BY MASS SPECTROMETRY</scope>
    <source>
        <strain>Wistar</strain>
        <tissue>Brain</tissue>
    </source>
</reference>
<reference key="2">
    <citation type="journal article" date="2004" name="Genome Res.">
        <title>The status, quality, and expansion of the NIH full-length cDNA project: the Mammalian Gene Collection (MGC).</title>
        <authorList>
            <consortium name="The MGC Project Team"/>
        </authorList>
    </citation>
    <scope>NUCLEOTIDE SEQUENCE [LARGE SCALE MRNA] (ISOFORM 1)</scope>
    <source>
        <tissue>Kidney</tissue>
    </source>
</reference>
<reference key="3">
    <citation type="journal article" date="2006" name="J. Proteome Res.">
        <title>Phosphoproteomic analysis of rat liver by high capacity IMAC and LC-MS/MS.</title>
        <authorList>
            <person name="Moser K."/>
            <person name="White F.M."/>
        </authorList>
    </citation>
    <scope>IDENTIFICATION BY MASS SPECTROMETRY [LARGE SCALE ANALYSIS]</scope>
</reference>
<reference key="4">
    <citation type="journal article" date="2012" name="Nat. Commun.">
        <title>Quantitative maps of protein phosphorylation sites across 14 different rat organs and tissues.</title>
        <authorList>
            <person name="Lundby A."/>
            <person name="Secher A."/>
            <person name="Lage K."/>
            <person name="Nordsborg N.B."/>
            <person name="Dmytriyev A."/>
            <person name="Lundby C."/>
            <person name="Olsen J.V."/>
        </authorList>
    </citation>
    <scope>PHOSPHORYLATION [LARGE SCALE ANALYSIS] AT SER-359</scope>
    <scope>IDENTIFICATION BY MASS SPECTROMETRY [LARGE SCALE ANALYSIS]</scope>
</reference>
<reference key="5">
    <citation type="journal article" date="2013" name="PLoS ONE">
        <title>Arginine methylation of hnRNP A2 does not directly govern its subcellular localization.</title>
        <authorList>
            <person name="Friend L.R."/>
            <person name="Landsberg M.J."/>
            <person name="Nouwens A.S."/>
            <person name="Wei Y."/>
            <person name="Rothnagel J.A."/>
            <person name="Smith R."/>
        </authorList>
    </citation>
    <scope>METHYLATION AT ARG-214; ARG-216; ARG-226; ARG-239; ARG-246 AND ARG-286</scope>
</reference>
<protein>
    <recommendedName>
        <fullName>Heterogeneous nuclear ribonucleoprotein A3</fullName>
        <shortName>hnRNP A3</shortName>
    </recommendedName>
</protein>
<keyword id="KW-0007">Acetylation</keyword>
<keyword id="KW-0025">Alternative splicing</keyword>
<keyword id="KW-0903">Direct protein sequencing</keyword>
<keyword id="KW-1017">Isopeptide bond</keyword>
<keyword id="KW-0488">Methylation</keyword>
<keyword id="KW-0507">mRNA processing</keyword>
<keyword id="KW-0508">mRNA splicing</keyword>
<keyword id="KW-0539">Nucleus</keyword>
<keyword id="KW-0597">Phosphoprotein</keyword>
<keyword id="KW-1185">Reference proteome</keyword>
<keyword id="KW-0677">Repeat</keyword>
<keyword id="KW-0687">Ribonucleoprotein</keyword>
<keyword id="KW-0694">RNA-binding</keyword>
<keyword id="KW-0747">Spliceosome</keyword>
<keyword id="KW-0832">Ubl conjugation</keyword>
<proteinExistence type="evidence at protein level"/>
<organism>
    <name type="scientific">Rattus norvegicus</name>
    <name type="common">Rat</name>
    <dbReference type="NCBI Taxonomy" id="10116"/>
    <lineage>
        <taxon>Eukaryota</taxon>
        <taxon>Metazoa</taxon>
        <taxon>Chordata</taxon>
        <taxon>Craniata</taxon>
        <taxon>Vertebrata</taxon>
        <taxon>Euteleostomi</taxon>
        <taxon>Mammalia</taxon>
        <taxon>Eutheria</taxon>
        <taxon>Euarchontoglires</taxon>
        <taxon>Glires</taxon>
        <taxon>Rodentia</taxon>
        <taxon>Myomorpha</taxon>
        <taxon>Muroidea</taxon>
        <taxon>Muridae</taxon>
        <taxon>Murinae</taxon>
        <taxon>Rattus</taxon>
    </lineage>
</organism>
<gene>
    <name type="primary">Hnrnpa3</name>
    <name type="synonym">Hnrpa3</name>
</gene>
<evidence type="ECO:0000250" key="1"/>
<evidence type="ECO:0000250" key="2">
    <source>
        <dbReference type="UniProtKB" id="P51991"/>
    </source>
</evidence>
<evidence type="ECO:0000250" key="3">
    <source>
        <dbReference type="UniProtKB" id="Q8BG05"/>
    </source>
</evidence>
<evidence type="ECO:0000255" key="4">
    <source>
        <dbReference type="PROSITE-ProRule" id="PRU00176"/>
    </source>
</evidence>
<evidence type="ECO:0000256" key="5">
    <source>
        <dbReference type="SAM" id="MobiDB-lite"/>
    </source>
</evidence>
<evidence type="ECO:0000269" key="6">
    <source>
    </source>
</evidence>
<evidence type="ECO:0000269" key="7">
    <source>
    </source>
</evidence>
<evidence type="ECO:0000303" key="8">
    <source>
    </source>
</evidence>
<evidence type="ECO:0007744" key="9">
    <source>
    </source>
</evidence>
<accession>Q6URK4</accession>
<accession>Q6URK3</accession>
<dbReference type="EMBL" id="AY363226">
    <property type="protein sequence ID" value="AAQ63630.1"/>
    <property type="molecule type" value="mRNA"/>
</dbReference>
<dbReference type="EMBL" id="AY363227">
    <property type="protein sequence ID" value="AAQ63631.1"/>
    <property type="molecule type" value="mRNA"/>
</dbReference>
<dbReference type="EMBL" id="BC081878">
    <property type="protein sequence ID" value="AAH81878.1"/>
    <property type="molecule type" value="mRNA"/>
</dbReference>
<dbReference type="RefSeq" id="NP_001104764.1">
    <molecule id="Q6URK4-1"/>
    <property type="nucleotide sequence ID" value="NM_001111294.1"/>
</dbReference>
<dbReference type="RefSeq" id="NP_001104765.1">
    <molecule id="Q6URK4-2"/>
    <property type="nucleotide sequence ID" value="NM_001111295.1"/>
</dbReference>
<dbReference type="RefSeq" id="NP_937765.1">
    <molecule id="Q6URK4-1"/>
    <property type="nucleotide sequence ID" value="NM_198132.3"/>
</dbReference>
<dbReference type="RefSeq" id="XP_008760133.1">
    <molecule id="Q6URK4-2"/>
    <property type="nucleotide sequence ID" value="XM_008761911.4"/>
</dbReference>
<dbReference type="RefSeq" id="XP_008760134.1">
    <molecule id="Q6URK4-2"/>
    <property type="nucleotide sequence ID" value="XM_008761912.4"/>
</dbReference>
<dbReference type="RefSeq" id="XP_063140201.1">
    <molecule id="Q6URK4-1"/>
    <property type="nucleotide sequence ID" value="XM_063284131.1"/>
</dbReference>
<dbReference type="RefSeq" id="XP_063140204.1">
    <molecule id="Q6URK4-2"/>
    <property type="nucleotide sequence ID" value="XM_063284134.1"/>
</dbReference>
<dbReference type="SMR" id="Q6URK4"/>
<dbReference type="BioGRID" id="263224">
    <property type="interactions" value="6"/>
</dbReference>
<dbReference type="FunCoup" id="Q6URK4">
    <property type="interactions" value="4881"/>
</dbReference>
<dbReference type="IntAct" id="Q6URK4">
    <property type="interactions" value="7"/>
</dbReference>
<dbReference type="MINT" id="Q6URK4"/>
<dbReference type="STRING" id="10116.ENSRNOP00000069876"/>
<dbReference type="GlyGen" id="Q6URK4">
    <property type="glycosylation" value="1 site, 1 O-linked glycan (1 site)"/>
</dbReference>
<dbReference type="iPTMnet" id="Q6URK4"/>
<dbReference type="PhosphoSitePlus" id="Q6URK4"/>
<dbReference type="jPOST" id="Q6URK4"/>
<dbReference type="PaxDb" id="10116-ENSRNOP00000041984"/>
<dbReference type="Ensembl" id="ENSRNOT00000078872.2">
    <molecule id="Q6URK4-1"/>
    <property type="protein sequence ID" value="ENSRNOP00000069876.1"/>
    <property type="gene ID" value="ENSRNOG00000052968.2"/>
</dbReference>
<dbReference type="GeneID" id="362152"/>
<dbReference type="KEGG" id="rno:362152"/>
<dbReference type="UCSC" id="RGD:727807">
    <molecule id="Q6URK4-1"/>
    <property type="organism name" value="rat"/>
</dbReference>
<dbReference type="AGR" id="RGD:727807"/>
<dbReference type="CTD" id="220988"/>
<dbReference type="RGD" id="727807">
    <property type="gene designation" value="Hnrnpa3"/>
</dbReference>
<dbReference type="eggNOG" id="KOG0118">
    <property type="taxonomic scope" value="Eukaryota"/>
</dbReference>
<dbReference type="GeneTree" id="ENSGT00940000153147"/>
<dbReference type="HOGENOM" id="CLU_012062_1_0_1"/>
<dbReference type="InParanoid" id="Q6URK4"/>
<dbReference type="OMA" id="HCEAKRA"/>
<dbReference type="OrthoDB" id="1875751at2759"/>
<dbReference type="PRO" id="PR:Q6URK4"/>
<dbReference type="Proteomes" id="UP000002494">
    <property type="component" value="Chromosome 3"/>
</dbReference>
<dbReference type="Bgee" id="ENSRNOG00000052968">
    <property type="expression patterns" value="Expressed in thymus and 20 other cell types or tissues"/>
</dbReference>
<dbReference type="GO" id="GO:0071013">
    <property type="term" value="C:catalytic step 2 spliceosome"/>
    <property type="evidence" value="ECO:0000266"/>
    <property type="project" value="RGD"/>
</dbReference>
<dbReference type="GO" id="GO:0098978">
    <property type="term" value="C:glutamatergic synapse"/>
    <property type="evidence" value="ECO:0000314"/>
    <property type="project" value="SynGO"/>
</dbReference>
<dbReference type="GO" id="GO:0005634">
    <property type="term" value="C:nucleus"/>
    <property type="evidence" value="ECO:0000266"/>
    <property type="project" value="RGD"/>
</dbReference>
<dbReference type="GO" id="GO:0098794">
    <property type="term" value="C:postsynapse"/>
    <property type="evidence" value="ECO:0000314"/>
    <property type="project" value="SynGO"/>
</dbReference>
<dbReference type="GO" id="GO:0014069">
    <property type="term" value="C:postsynaptic density"/>
    <property type="evidence" value="ECO:0000314"/>
    <property type="project" value="SynGO"/>
</dbReference>
<dbReference type="GO" id="GO:1990904">
    <property type="term" value="C:ribonucleoprotein complex"/>
    <property type="evidence" value="ECO:0000314"/>
    <property type="project" value="RGD"/>
</dbReference>
<dbReference type="GO" id="GO:0035770">
    <property type="term" value="C:ribonucleoprotein granule"/>
    <property type="evidence" value="ECO:0000314"/>
    <property type="project" value="RGD"/>
</dbReference>
<dbReference type="GO" id="GO:0003729">
    <property type="term" value="F:mRNA binding"/>
    <property type="evidence" value="ECO:0000315"/>
    <property type="project" value="RGD"/>
</dbReference>
<dbReference type="GO" id="GO:0051033">
    <property type="term" value="F:RNA transmembrane transporter activity"/>
    <property type="evidence" value="ECO:0000315"/>
    <property type="project" value="RGD"/>
</dbReference>
<dbReference type="GO" id="GO:0000398">
    <property type="term" value="P:mRNA splicing, via spliceosome"/>
    <property type="evidence" value="ECO:0000318"/>
    <property type="project" value="GO_Central"/>
</dbReference>
<dbReference type="GO" id="GO:0051028">
    <property type="term" value="P:mRNA transport"/>
    <property type="evidence" value="ECO:0000315"/>
    <property type="project" value="RGD"/>
</dbReference>
<dbReference type="CDD" id="cd12578">
    <property type="entry name" value="RRM1_hnRNPA_like"/>
    <property type="match status" value="1"/>
</dbReference>
<dbReference type="CDD" id="cd12582">
    <property type="entry name" value="RRM2_hnRNPA3"/>
    <property type="match status" value="1"/>
</dbReference>
<dbReference type="FunFam" id="3.30.70.330:FF:000158">
    <property type="entry name" value="heterogeneous nuclear ribonucleoprotein A3 isoform X1"/>
    <property type="match status" value="1"/>
</dbReference>
<dbReference type="FunFam" id="3.30.70.330:FF:000350">
    <property type="entry name" value="heterogeneous nuclear ribonucleoprotein A3 isoform X1"/>
    <property type="match status" value="1"/>
</dbReference>
<dbReference type="Gene3D" id="3.30.70.330">
    <property type="match status" value="2"/>
</dbReference>
<dbReference type="InterPro" id="IPR034516">
    <property type="entry name" value="hnRNPA1/3_RRM2"/>
</dbReference>
<dbReference type="InterPro" id="IPR012677">
    <property type="entry name" value="Nucleotide-bd_a/b_plait_sf"/>
</dbReference>
<dbReference type="InterPro" id="IPR035979">
    <property type="entry name" value="RBD_domain_sf"/>
</dbReference>
<dbReference type="InterPro" id="IPR000504">
    <property type="entry name" value="RRM_dom"/>
</dbReference>
<dbReference type="PANTHER" id="PTHR48026:SF12">
    <property type="entry name" value="HETEROGENEOUS NUCLEAR RIBONUCLEOPROTEIN A3"/>
    <property type="match status" value="1"/>
</dbReference>
<dbReference type="PANTHER" id="PTHR48026">
    <property type="entry name" value="HOMOLOGOUS TO DROSOPHILA SQD (SQUID) PROTEIN"/>
    <property type="match status" value="1"/>
</dbReference>
<dbReference type="Pfam" id="PF00076">
    <property type="entry name" value="RRM_1"/>
    <property type="match status" value="2"/>
</dbReference>
<dbReference type="SMART" id="SM00360">
    <property type="entry name" value="RRM"/>
    <property type="match status" value="2"/>
</dbReference>
<dbReference type="SUPFAM" id="SSF54928">
    <property type="entry name" value="RNA-binding domain, RBD"/>
    <property type="match status" value="2"/>
</dbReference>
<dbReference type="PROSITE" id="PS50102">
    <property type="entry name" value="RRM"/>
    <property type="match status" value="2"/>
</dbReference>
<comment type="function">
    <text evidence="6">Plays a role in cytoplasmic trafficking of RNA. Binds to the cis-acting response element, A2RE. May be involved in pre-mRNA splicing.</text>
</comment>
<comment type="subunit">
    <text evidence="1">Identified in the spliceosome C complex.</text>
</comment>
<comment type="subcellular location">
    <subcellularLocation>
        <location evidence="1">Nucleus</location>
    </subcellularLocation>
    <text evidence="1">Component of ribonucleosomes.</text>
</comment>
<comment type="alternative products">
    <event type="alternative splicing"/>
    <isoform>
        <id>Q6URK4-1</id>
        <name>1</name>
        <name>a</name>
        <sequence type="displayed"/>
    </isoform>
    <isoform>
        <id>Q6URK4-2</id>
        <name>2</name>
        <name>b</name>
        <sequence type="described" ref="VSP_011400"/>
    </isoform>
</comment>
<name>ROA3_RAT</name>